<feature type="chain" id="PRO_0000216354" description="Antitoxin ParD">
    <location>
        <begin position="1"/>
        <end position="83"/>
    </location>
</feature>
<feature type="region of interest" description="Disordered" evidence="2">
    <location>
        <begin position="54"/>
        <end position="83"/>
    </location>
</feature>
<keyword id="KW-1185">Reference proteome</keyword>
<keyword id="KW-1277">Toxin-antitoxin system</keyword>
<name>PARD_MYCBO</name>
<comment type="function">
    <text evidence="1">Antitoxin component of a type II toxin-antitoxin (TA) system. Neutralizes the effect of toxin ParE (By similarity).</text>
</comment>
<comment type="similarity">
    <text evidence="3">Belongs to the ParD antitoxin family.</text>
</comment>
<reference key="1">
    <citation type="journal article" date="2003" name="Proc. Natl. Acad. Sci. U.S.A.">
        <title>The complete genome sequence of Mycobacterium bovis.</title>
        <authorList>
            <person name="Garnier T."/>
            <person name="Eiglmeier K."/>
            <person name="Camus J.-C."/>
            <person name="Medina N."/>
            <person name="Mansoor H."/>
            <person name="Pryor M."/>
            <person name="Duthoy S."/>
            <person name="Grondin S."/>
            <person name="Lacroix C."/>
            <person name="Monsempe C."/>
            <person name="Simon S."/>
            <person name="Harris B."/>
            <person name="Atkin R."/>
            <person name="Doggett J."/>
            <person name="Mayes R."/>
            <person name="Keating L."/>
            <person name="Wheeler P.R."/>
            <person name="Parkhill J."/>
            <person name="Barrell B.G."/>
            <person name="Cole S.T."/>
            <person name="Gordon S.V."/>
            <person name="Hewinson R.G."/>
        </authorList>
    </citation>
    <scope>NUCLEOTIDE SEQUENCE [LARGE SCALE GENOMIC DNA]</scope>
    <source>
        <strain>ATCC BAA-935 / AF2122/97</strain>
    </source>
</reference>
<reference key="2">
    <citation type="journal article" date="2017" name="Genome Announc.">
        <title>Updated reference genome sequence and annotation of Mycobacterium bovis AF2122/97.</title>
        <authorList>
            <person name="Malone K.M."/>
            <person name="Farrell D."/>
            <person name="Stuber T.P."/>
            <person name="Schubert O.T."/>
            <person name="Aebersold R."/>
            <person name="Robbe-Austerman S."/>
            <person name="Gordon S.V."/>
        </authorList>
    </citation>
    <scope>NUCLEOTIDE SEQUENCE [LARGE SCALE GENOMIC DNA]</scope>
    <scope>GENOME REANNOTATION</scope>
    <source>
        <strain>ATCC BAA-935 / AF2122/97</strain>
    </source>
</reference>
<gene>
    <name type="primary">parD</name>
    <name type="ordered locus">BQ2027_MB1995C</name>
</gene>
<evidence type="ECO:0000250" key="1"/>
<evidence type="ECO:0000256" key="2">
    <source>
        <dbReference type="SAM" id="MobiDB-lite"/>
    </source>
</evidence>
<evidence type="ECO:0000305" key="3"/>
<protein>
    <recommendedName>
        <fullName>Antitoxin ParD</fullName>
    </recommendedName>
</protein>
<organism>
    <name type="scientific">Mycobacterium bovis (strain ATCC BAA-935 / AF2122/97)</name>
    <dbReference type="NCBI Taxonomy" id="233413"/>
    <lineage>
        <taxon>Bacteria</taxon>
        <taxon>Bacillati</taxon>
        <taxon>Actinomycetota</taxon>
        <taxon>Actinomycetes</taxon>
        <taxon>Mycobacteriales</taxon>
        <taxon>Mycobacteriaceae</taxon>
        <taxon>Mycobacterium</taxon>
        <taxon>Mycobacterium tuberculosis complex</taxon>
    </lineage>
</organism>
<sequence length="83" mass="9239">MGKNTSFVLDEHYSAFIDGEIAAGRYRSASEVIRSALRLLEDRETQLRALREALEAGERSGSSTPFDFDGFLGRKRADASRGR</sequence>
<dbReference type="EMBL" id="LT708304">
    <property type="protein sequence ID" value="SIU00599.1"/>
    <property type="molecule type" value="Genomic_DNA"/>
</dbReference>
<dbReference type="RefSeq" id="NP_855645.1">
    <property type="nucleotide sequence ID" value="NC_002945.3"/>
</dbReference>
<dbReference type="RefSeq" id="WP_003409899.1">
    <property type="nucleotide sequence ID" value="NC_002945.4"/>
</dbReference>
<dbReference type="SMR" id="P67299"/>
<dbReference type="KEGG" id="mbo:BQ2027_MB1995C"/>
<dbReference type="PATRIC" id="fig|233413.5.peg.2189"/>
<dbReference type="Proteomes" id="UP000001419">
    <property type="component" value="Chromosome"/>
</dbReference>
<dbReference type="GO" id="GO:0006355">
    <property type="term" value="P:regulation of DNA-templated transcription"/>
    <property type="evidence" value="ECO:0007669"/>
    <property type="project" value="InterPro"/>
</dbReference>
<dbReference type="CDD" id="cd22231">
    <property type="entry name" value="RHH_NikR_HicB-like"/>
    <property type="match status" value="1"/>
</dbReference>
<dbReference type="Gene3D" id="6.10.10.120">
    <property type="entry name" value="Antitoxin ParD1-like"/>
    <property type="match status" value="1"/>
</dbReference>
<dbReference type="InterPro" id="IPR022789">
    <property type="entry name" value="ParD"/>
</dbReference>
<dbReference type="InterPro" id="IPR038296">
    <property type="entry name" value="ParD_sf"/>
</dbReference>
<dbReference type="InterPro" id="IPR010985">
    <property type="entry name" value="Ribbon_hlx_hlx"/>
</dbReference>
<dbReference type="NCBIfam" id="TIGR02606">
    <property type="entry name" value="antidote_CC2985"/>
    <property type="match status" value="1"/>
</dbReference>
<dbReference type="PANTHER" id="PTHR36582">
    <property type="entry name" value="ANTITOXIN PARD"/>
    <property type="match status" value="1"/>
</dbReference>
<dbReference type="PANTHER" id="PTHR36582:SF2">
    <property type="entry name" value="ANTITOXIN PARD"/>
    <property type="match status" value="1"/>
</dbReference>
<dbReference type="Pfam" id="PF03693">
    <property type="entry name" value="ParD_antitoxin"/>
    <property type="match status" value="1"/>
</dbReference>
<dbReference type="SUPFAM" id="SSF47598">
    <property type="entry name" value="Ribbon-helix-helix"/>
    <property type="match status" value="1"/>
</dbReference>
<accession>P67299</accession>
<accession>A0A1R3XZX9</accession>
<accession>P95254</accession>
<accession>X2BJG7</accession>
<proteinExistence type="inferred from homology"/>